<evidence type="ECO:0000255" key="1">
    <source>
        <dbReference type="HAMAP-Rule" id="MF_00381"/>
    </source>
</evidence>
<evidence type="ECO:0000256" key="2">
    <source>
        <dbReference type="SAM" id="MobiDB-lite"/>
    </source>
</evidence>
<keyword id="KW-0233">DNA recombination</keyword>
<keyword id="KW-0238">DNA-binding</keyword>
<keyword id="KW-0804">Transcription</keyword>
<keyword id="KW-0805">Transcription regulation</keyword>
<keyword id="KW-0810">Translation regulation</keyword>
<accession>A3NXW8</accession>
<feature type="chain" id="PRO_1000122198" description="Integration host factor subunit beta">
    <location>
        <begin position="1"/>
        <end position="107"/>
    </location>
</feature>
<feature type="region of interest" description="Disordered" evidence="2">
    <location>
        <begin position="55"/>
        <end position="107"/>
    </location>
</feature>
<feature type="compositionally biased region" description="Basic and acidic residues" evidence="2">
    <location>
        <begin position="65"/>
        <end position="101"/>
    </location>
</feature>
<name>IHFB_BURP0</name>
<comment type="function">
    <text evidence="1">This protein is one of the two subunits of integration host factor, a specific DNA-binding protein that functions in genetic recombination as well as in transcriptional and translational control.</text>
</comment>
<comment type="subunit">
    <text evidence="1">Heterodimer of an alpha and a beta chain.</text>
</comment>
<comment type="similarity">
    <text evidence="1">Belongs to the bacterial histone-like protein family.</text>
</comment>
<dbReference type="EMBL" id="CP000572">
    <property type="protein sequence ID" value="ABN89373.1"/>
    <property type="molecule type" value="Genomic_DNA"/>
</dbReference>
<dbReference type="RefSeq" id="WP_004189865.1">
    <property type="nucleotide sequence ID" value="NC_009076.1"/>
</dbReference>
<dbReference type="SMR" id="A3NXW8"/>
<dbReference type="KEGG" id="bpl:BURPS1106A_2944"/>
<dbReference type="HOGENOM" id="CLU_105066_2_0_4"/>
<dbReference type="Proteomes" id="UP000006738">
    <property type="component" value="Chromosome I"/>
</dbReference>
<dbReference type="GO" id="GO:0005694">
    <property type="term" value="C:chromosome"/>
    <property type="evidence" value="ECO:0007669"/>
    <property type="project" value="InterPro"/>
</dbReference>
<dbReference type="GO" id="GO:0005829">
    <property type="term" value="C:cytosol"/>
    <property type="evidence" value="ECO:0007669"/>
    <property type="project" value="TreeGrafter"/>
</dbReference>
<dbReference type="GO" id="GO:0003677">
    <property type="term" value="F:DNA binding"/>
    <property type="evidence" value="ECO:0007669"/>
    <property type="project" value="UniProtKB-UniRule"/>
</dbReference>
<dbReference type="GO" id="GO:0030527">
    <property type="term" value="F:structural constituent of chromatin"/>
    <property type="evidence" value="ECO:0007669"/>
    <property type="project" value="InterPro"/>
</dbReference>
<dbReference type="GO" id="GO:0006310">
    <property type="term" value="P:DNA recombination"/>
    <property type="evidence" value="ECO:0007669"/>
    <property type="project" value="UniProtKB-UniRule"/>
</dbReference>
<dbReference type="GO" id="GO:0006355">
    <property type="term" value="P:regulation of DNA-templated transcription"/>
    <property type="evidence" value="ECO:0007669"/>
    <property type="project" value="UniProtKB-UniRule"/>
</dbReference>
<dbReference type="GO" id="GO:0006417">
    <property type="term" value="P:regulation of translation"/>
    <property type="evidence" value="ECO:0007669"/>
    <property type="project" value="UniProtKB-UniRule"/>
</dbReference>
<dbReference type="CDD" id="cd13836">
    <property type="entry name" value="IHF_B"/>
    <property type="match status" value="1"/>
</dbReference>
<dbReference type="Gene3D" id="4.10.520.10">
    <property type="entry name" value="IHF-like DNA-binding proteins"/>
    <property type="match status" value="1"/>
</dbReference>
<dbReference type="HAMAP" id="MF_00381">
    <property type="entry name" value="IHF_beta"/>
    <property type="match status" value="1"/>
</dbReference>
<dbReference type="InterPro" id="IPR000119">
    <property type="entry name" value="Hist_DNA-bd"/>
</dbReference>
<dbReference type="InterPro" id="IPR010992">
    <property type="entry name" value="IHF-like_DNA-bd_dom_sf"/>
</dbReference>
<dbReference type="InterPro" id="IPR005685">
    <property type="entry name" value="IHF_beta"/>
</dbReference>
<dbReference type="NCBIfam" id="TIGR00988">
    <property type="entry name" value="hip"/>
    <property type="match status" value="1"/>
</dbReference>
<dbReference type="NCBIfam" id="NF001222">
    <property type="entry name" value="PRK00199.1"/>
    <property type="match status" value="1"/>
</dbReference>
<dbReference type="PANTHER" id="PTHR33175">
    <property type="entry name" value="DNA-BINDING PROTEIN HU"/>
    <property type="match status" value="1"/>
</dbReference>
<dbReference type="PANTHER" id="PTHR33175:SF5">
    <property type="entry name" value="INTEGRATION HOST FACTOR SUBUNIT BETA"/>
    <property type="match status" value="1"/>
</dbReference>
<dbReference type="Pfam" id="PF00216">
    <property type="entry name" value="Bac_DNA_binding"/>
    <property type="match status" value="1"/>
</dbReference>
<dbReference type="PRINTS" id="PR01727">
    <property type="entry name" value="DNABINDINGHU"/>
</dbReference>
<dbReference type="SMART" id="SM00411">
    <property type="entry name" value="BHL"/>
    <property type="match status" value="1"/>
</dbReference>
<dbReference type="SUPFAM" id="SSF47729">
    <property type="entry name" value="IHF-like DNA-binding proteins"/>
    <property type="match status" value="1"/>
</dbReference>
<sequence length="107" mass="11918">MTKSELVAQLASRFPQLVLKDADFAVKTMLDAMSDALSKGHRIEIRGFGSFGLNRRPARVGRNPKSGEKVQVPEKHVPHFKPGKELRERVDGRAGEPLKNDEPEDAQ</sequence>
<organism>
    <name type="scientific">Burkholderia pseudomallei (strain 1106a)</name>
    <dbReference type="NCBI Taxonomy" id="357348"/>
    <lineage>
        <taxon>Bacteria</taxon>
        <taxon>Pseudomonadati</taxon>
        <taxon>Pseudomonadota</taxon>
        <taxon>Betaproteobacteria</taxon>
        <taxon>Burkholderiales</taxon>
        <taxon>Burkholderiaceae</taxon>
        <taxon>Burkholderia</taxon>
        <taxon>pseudomallei group</taxon>
    </lineage>
</organism>
<protein>
    <recommendedName>
        <fullName evidence="1">Integration host factor subunit beta</fullName>
        <shortName evidence="1">IHF-beta</shortName>
    </recommendedName>
</protein>
<proteinExistence type="inferred from homology"/>
<gene>
    <name evidence="1" type="primary">ihfB</name>
    <name evidence="1" type="synonym">himD</name>
    <name type="ordered locus">BURPS1106A_2944</name>
</gene>
<reference key="1">
    <citation type="journal article" date="2010" name="Genome Biol. Evol.">
        <title>Continuing evolution of Burkholderia mallei through genome reduction and large-scale rearrangements.</title>
        <authorList>
            <person name="Losada L."/>
            <person name="Ronning C.M."/>
            <person name="DeShazer D."/>
            <person name="Woods D."/>
            <person name="Fedorova N."/>
            <person name="Kim H.S."/>
            <person name="Shabalina S.A."/>
            <person name="Pearson T.R."/>
            <person name="Brinkac L."/>
            <person name="Tan P."/>
            <person name="Nandi T."/>
            <person name="Crabtree J."/>
            <person name="Badger J."/>
            <person name="Beckstrom-Sternberg S."/>
            <person name="Saqib M."/>
            <person name="Schutzer S.E."/>
            <person name="Keim P."/>
            <person name="Nierman W.C."/>
        </authorList>
    </citation>
    <scope>NUCLEOTIDE SEQUENCE [LARGE SCALE GENOMIC DNA]</scope>
    <source>
        <strain>1106a</strain>
    </source>
</reference>